<proteinExistence type="evidence at transcript level"/>
<dbReference type="EC" id="2.3.1.199" evidence="2"/>
<dbReference type="EMBL" id="AF461182">
    <property type="protein sequence ID" value="AAO15594.1"/>
    <property type="molecule type" value="mRNA"/>
</dbReference>
<dbReference type="EMBL" id="AF461187">
    <property type="protein sequence ID" value="AAO15601.1"/>
    <property type="molecule type" value="Genomic_DNA"/>
</dbReference>
<dbReference type="EMBL" id="AF461183">
    <property type="protein sequence ID" value="AAO15601.1"/>
    <property type="status" value="JOINED"/>
    <property type="molecule type" value="Genomic_DNA"/>
</dbReference>
<dbReference type="EMBL" id="AF461184">
    <property type="protein sequence ID" value="AAO15601.1"/>
    <property type="status" value="JOINED"/>
    <property type="molecule type" value="Genomic_DNA"/>
</dbReference>
<dbReference type="EMBL" id="AF461185">
    <property type="protein sequence ID" value="AAO15601.1"/>
    <property type="status" value="JOINED"/>
    <property type="molecule type" value="Genomic_DNA"/>
</dbReference>
<dbReference type="EMBL" id="AF461186">
    <property type="protein sequence ID" value="AAO15601.1"/>
    <property type="status" value="JOINED"/>
    <property type="molecule type" value="Genomic_DNA"/>
</dbReference>
<dbReference type="EMBL" id="AB063100">
    <property type="protein sequence ID" value="BAB60806.1"/>
    <property type="molecule type" value="mRNA"/>
</dbReference>
<dbReference type="RefSeq" id="NP_001270132.1">
    <property type="nucleotide sequence ID" value="NM_001283203.1"/>
</dbReference>
<dbReference type="RefSeq" id="XP_045246205.1">
    <property type="nucleotide sequence ID" value="XM_045390270.2"/>
</dbReference>
<dbReference type="SMR" id="Q95K73"/>
<dbReference type="STRING" id="9541.ENSMFAP00000006615"/>
<dbReference type="GlyCosmos" id="Q95K73">
    <property type="glycosylation" value="1 site, No reported glycans"/>
</dbReference>
<dbReference type="Ensembl" id="ENSMFAT00000025305.2">
    <property type="protein sequence ID" value="ENSMFAP00000006619.1"/>
    <property type="gene ID" value="ENSMFAG00000036147.2"/>
</dbReference>
<dbReference type="GeneID" id="102138130"/>
<dbReference type="VEuPathDB" id="HostDB:ENSMFAG00000036147"/>
<dbReference type="eggNOG" id="KOG3071">
    <property type="taxonomic scope" value="Eukaryota"/>
</dbReference>
<dbReference type="GeneTree" id="ENSGT01050000244838"/>
<dbReference type="OMA" id="WTYFTST"/>
<dbReference type="UniPathway" id="UPA00094"/>
<dbReference type="Proteomes" id="UP000233100">
    <property type="component" value="Chromosome 4"/>
</dbReference>
<dbReference type="Bgee" id="ENSMFAG00000036147">
    <property type="expression patterns" value="Expressed in thymus and 5 other cell types or tissues"/>
</dbReference>
<dbReference type="GO" id="GO:0005783">
    <property type="term" value="C:endoplasmic reticulum"/>
    <property type="evidence" value="ECO:0000250"/>
    <property type="project" value="UniProtKB"/>
</dbReference>
<dbReference type="GO" id="GO:0005789">
    <property type="term" value="C:endoplasmic reticulum membrane"/>
    <property type="evidence" value="ECO:0000250"/>
    <property type="project" value="UniProtKB"/>
</dbReference>
<dbReference type="GO" id="GO:0009922">
    <property type="term" value="F:fatty acid elongase activity"/>
    <property type="evidence" value="ECO:0000250"/>
    <property type="project" value="UniProtKB"/>
</dbReference>
<dbReference type="GO" id="GO:0034625">
    <property type="term" value="P:fatty acid elongation, monounsaturated fatty acid"/>
    <property type="evidence" value="ECO:0007669"/>
    <property type="project" value="TreeGrafter"/>
</dbReference>
<dbReference type="GO" id="GO:0034626">
    <property type="term" value="P:fatty acid elongation, polyunsaturated fatty acid"/>
    <property type="evidence" value="ECO:0000250"/>
    <property type="project" value="UniProtKB"/>
</dbReference>
<dbReference type="GO" id="GO:0019367">
    <property type="term" value="P:fatty acid elongation, saturated fatty acid"/>
    <property type="evidence" value="ECO:0000250"/>
    <property type="project" value="UniProtKB"/>
</dbReference>
<dbReference type="GO" id="GO:0035338">
    <property type="term" value="P:long-chain fatty-acyl-CoA biosynthetic process"/>
    <property type="evidence" value="ECO:0007669"/>
    <property type="project" value="UniProtKB-UniRule"/>
</dbReference>
<dbReference type="GO" id="GO:0030148">
    <property type="term" value="P:sphingolipid biosynthetic process"/>
    <property type="evidence" value="ECO:0007669"/>
    <property type="project" value="TreeGrafter"/>
</dbReference>
<dbReference type="GO" id="GO:0006636">
    <property type="term" value="P:unsaturated fatty acid biosynthetic process"/>
    <property type="evidence" value="ECO:0007669"/>
    <property type="project" value="UniProtKB-UniRule"/>
</dbReference>
<dbReference type="GO" id="GO:0042761">
    <property type="term" value="P:very long-chain fatty acid biosynthetic process"/>
    <property type="evidence" value="ECO:0000250"/>
    <property type="project" value="UniProtKB"/>
</dbReference>
<dbReference type="HAMAP" id="MF_03204">
    <property type="entry name" value="VLCF_elongase_4"/>
    <property type="match status" value="1"/>
</dbReference>
<dbReference type="InterPro" id="IPR030457">
    <property type="entry name" value="ELO_CS"/>
</dbReference>
<dbReference type="InterPro" id="IPR002076">
    <property type="entry name" value="ELO_fam"/>
</dbReference>
<dbReference type="InterPro" id="IPR033678">
    <property type="entry name" value="ELOVL4"/>
</dbReference>
<dbReference type="PANTHER" id="PTHR11157:SF12">
    <property type="entry name" value="ELONGATION OF VERY LONG CHAIN FATTY ACIDS PROTEIN 4"/>
    <property type="match status" value="1"/>
</dbReference>
<dbReference type="PANTHER" id="PTHR11157">
    <property type="entry name" value="FATTY ACID ACYL TRANSFERASE-RELATED"/>
    <property type="match status" value="1"/>
</dbReference>
<dbReference type="Pfam" id="PF01151">
    <property type="entry name" value="ELO"/>
    <property type="match status" value="1"/>
</dbReference>
<dbReference type="PROSITE" id="PS01188">
    <property type="entry name" value="ELO"/>
    <property type="match status" value="1"/>
</dbReference>
<keyword id="KW-0256">Endoplasmic reticulum</keyword>
<keyword id="KW-0275">Fatty acid biosynthesis</keyword>
<keyword id="KW-0276">Fatty acid metabolism</keyword>
<keyword id="KW-0325">Glycoprotein</keyword>
<keyword id="KW-0444">Lipid biosynthesis</keyword>
<keyword id="KW-0443">Lipid metabolism</keyword>
<keyword id="KW-0472">Membrane</keyword>
<keyword id="KW-1185">Reference proteome</keyword>
<keyword id="KW-0808">Transferase</keyword>
<keyword id="KW-0812">Transmembrane</keyword>
<keyword id="KW-1133">Transmembrane helix</keyword>
<feature type="chain" id="PRO_0000207543" description="Very long chain fatty acid elongase 4">
    <location>
        <begin position="1"/>
        <end position="314"/>
    </location>
</feature>
<feature type="transmembrane region" description="Helical" evidence="2">
    <location>
        <begin position="42"/>
        <end position="62"/>
    </location>
</feature>
<feature type="transmembrane region" description="Helical" evidence="2">
    <location>
        <begin position="78"/>
        <end position="98"/>
    </location>
</feature>
<feature type="transmembrane region" description="Helical" evidence="2">
    <location>
        <begin position="127"/>
        <end position="147"/>
    </location>
</feature>
<feature type="transmembrane region" description="Helical" evidence="2">
    <location>
        <begin position="165"/>
        <end position="185"/>
    </location>
</feature>
<feature type="transmembrane region" description="Helical" evidence="2">
    <location>
        <begin position="188"/>
        <end position="208"/>
    </location>
</feature>
<feature type="transmembrane region" description="Helical" evidence="2">
    <location>
        <begin position="217"/>
        <end position="237"/>
    </location>
</feature>
<feature type="transmembrane region" description="Helical" evidence="2">
    <location>
        <begin position="247"/>
        <end position="267"/>
    </location>
</feature>
<feature type="region of interest" description="Disordered" evidence="3">
    <location>
        <begin position="274"/>
        <end position="314"/>
    </location>
</feature>
<feature type="short sequence motif" description="Di-lysine motif" evidence="2">
    <location>
        <begin position="310"/>
        <end position="314"/>
    </location>
</feature>
<feature type="compositionally biased region" description="Basic and acidic residues" evidence="3">
    <location>
        <begin position="293"/>
        <end position="304"/>
    </location>
</feature>
<feature type="compositionally biased region" description="Basic residues" evidence="3">
    <location>
        <begin position="305"/>
        <end position="314"/>
    </location>
</feature>
<feature type="glycosylation site" description="N-linked (GlcNAc...) asparagine" evidence="2">
    <location>
        <position position="20"/>
    </location>
</feature>
<sequence>MGLLDSEPGSVLNVVSTALNDTVEFYRWTWSIADKRVENWPLMQSPWPTLSISTLYLLFVWLGPKWMKDREPFQMRLVLIIYNFGMVLLNFFIFRELFMGSYNAGYSYICQSVDYSNNVNEVRIAAALWWYFVSKGVEYLDTVFFILRKKNNQVSFLHVYHHCTMFTLWWIGIKWVAGGQAFFGAQMNSFIHVIMYSYYGLAAFGPWIQKYLWWKRYLTMLQLVQFHVTIGHTALSLYTDCPFPKWMHWALIAYAISFIFLFLNFYIRTYKEPKKPKTGKTAMNGISANGVSKSEKQLVIENGKKQKNGKAKGD</sequence>
<accession>Q95K73</accession>
<protein>
    <recommendedName>
        <fullName evidence="2">Very long chain fatty acid elongase 4</fullName>
        <ecNumber evidence="2">2.3.1.199</ecNumber>
    </recommendedName>
    <alternativeName>
        <fullName evidence="2">3-keto acyl-CoA synthase ELOVL4</fullName>
    </alternativeName>
    <alternativeName>
        <fullName evidence="2">ELOVL fatty acid elongase 4</fullName>
        <shortName evidence="2">ELOVL FA elongase 4</shortName>
    </alternativeName>
    <alternativeName>
        <fullName evidence="2">Elongation of very long chain fatty acids protein 4</fullName>
    </alternativeName>
    <alternativeName>
        <fullName evidence="2">Very long chain 3-ketoacyl-CoA synthase 4</fullName>
    </alternativeName>
    <alternativeName>
        <fullName evidence="2">Very long chain 3-oxoacyl-CoA synthase 4</fullName>
    </alternativeName>
</protein>
<comment type="function">
    <text evidence="2">Catalyzes the first and rate-limiting reaction of the four reactions that constitute the long-chain fatty acids elongation cycle. This endoplasmic reticulum-bound enzymatic process allows the addition of 2 carbons to the chain of long- and very long-chain fatty acids (VLCFAs) per cycle. Condensing enzyme that catalyzes the synthesis of very long chain saturated (VLC-SFA) and polyunsaturated (PUFA) fatty acids that are involved in multiple biological processes as precursors of membrane lipids and lipid mediators. May play a critical role in early brain and skin development.</text>
</comment>
<comment type="catalytic activity">
    <reaction evidence="2">
        <text>a very-long-chain acyl-CoA + malonyl-CoA + H(+) = a very-long-chain 3-oxoacyl-CoA + CO2 + CoA</text>
        <dbReference type="Rhea" id="RHEA:32727"/>
        <dbReference type="ChEBI" id="CHEBI:15378"/>
        <dbReference type="ChEBI" id="CHEBI:16526"/>
        <dbReference type="ChEBI" id="CHEBI:57287"/>
        <dbReference type="ChEBI" id="CHEBI:57384"/>
        <dbReference type="ChEBI" id="CHEBI:90725"/>
        <dbReference type="ChEBI" id="CHEBI:90736"/>
        <dbReference type="EC" id="2.3.1.199"/>
    </reaction>
    <physiologicalReaction direction="left-to-right" evidence="1">
        <dbReference type="Rhea" id="RHEA:32728"/>
    </physiologicalReaction>
</comment>
<comment type="catalytic activity">
    <reaction evidence="1">
        <text>hexacosanoyl-CoA + malonyl-CoA + H(+) = 3-oxooctacosanyol-CoA + CO2 + CoA</text>
        <dbReference type="Rhea" id="RHEA:36519"/>
        <dbReference type="ChEBI" id="CHEBI:15378"/>
        <dbReference type="ChEBI" id="CHEBI:16526"/>
        <dbReference type="ChEBI" id="CHEBI:57287"/>
        <dbReference type="ChEBI" id="CHEBI:57384"/>
        <dbReference type="ChEBI" id="CHEBI:64868"/>
        <dbReference type="ChEBI" id="CHEBI:73976"/>
    </reaction>
    <physiologicalReaction direction="left-to-right" evidence="1">
        <dbReference type="Rhea" id="RHEA:36520"/>
    </physiologicalReaction>
</comment>
<comment type="catalytic activity">
    <reaction evidence="1">
        <text>octacosanoyl-CoA + malonyl-CoA + H(+) = 3-oxo-triacontanoyl-CoA + CO2 + CoA</text>
        <dbReference type="Rhea" id="RHEA:36807"/>
        <dbReference type="ChEBI" id="CHEBI:15378"/>
        <dbReference type="ChEBI" id="CHEBI:16526"/>
        <dbReference type="ChEBI" id="CHEBI:57287"/>
        <dbReference type="ChEBI" id="CHEBI:57384"/>
        <dbReference type="ChEBI" id="CHEBI:74141"/>
        <dbReference type="ChEBI" id="CHEBI:74228"/>
    </reaction>
    <physiologicalReaction direction="left-to-right" evidence="1">
        <dbReference type="Rhea" id="RHEA:36808"/>
    </physiologicalReaction>
</comment>
<comment type="catalytic activity">
    <reaction evidence="1">
        <text>triacontanoyl-CoA + malonyl-CoA + H(+) = 3-oxo-dotriacontanoyl-CoA + CO2 + CoA</text>
        <dbReference type="Rhea" id="RHEA:43852"/>
        <dbReference type="ChEBI" id="CHEBI:15378"/>
        <dbReference type="ChEBI" id="CHEBI:16526"/>
        <dbReference type="ChEBI" id="CHEBI:57287"/>
        <dbReference type="ChEBI" id="CHEBI:57384"/>
        <dbReference type="ChEBI" id="CHEBI:76386"/>
        <dbReference type="ChEBI" id="CHEBI:83795"/>
    </reaction>
    <physiologicalReaction direction="left-to-right" evidence="1">
        <dbReference type="Rhea" id="RHEA:43853"/>
    </physiologicalReaction>
</comment>
<comment type="catalytic activity">
    <reaction evidence="1">
        <text>(19Z,22Z,25Z,28Z,31Z)-tetratriacontapentaenoyl-CoA + malonyl-CoA + H(+) = 3-oxo-(21Z,24Z,27Z,30Z,33Z)-hexatriacontapentaenoyl-CoA + CO2 + CoA</text>
        <dbReference type="Rhea" id="RHEA:36871"/>
        <dbReference type="ChEBI" id="CHEBI:15378"/>
        <dbReference type="ChEBI" id="CHEBI:16526"/>
        <dbReference type="ChEBI" id="CHEBI:57287"/>
        <dbReference type="ChEBI" id="CHEBI:57384"/>
        <dbReference type="ChEBI" id="CHEBI:74260"/>
        <dbReference type="ChEBI" id="CHEBI:74261"/>
    </reaction>
    <physiologicalReaction direction="left-to-right" evidence="1">
        <dbReference type="Rhea" id="RHEA:36872"/>
    </physiologicalReaction>
</comment>
<comment type="catalytic activity">
    <reaction evidence="1">
        <text>(4Z,7Z,10Z,13Z,16Z,19Z)-docosahexaenoyl-CoA + malonyl-CoA + H(+) = 3-oxo-(6Z,9Z,12Z,15Z,18Z,21Z)-tetracosahexaenoyl-CoA + CO2 + CoA</text>
        <dbReference type="Rhea" id="RHEA:36943"/>
        <dbReference type="ChEBI" id="CHEBI:15378"/>
        <dbReference type="ChEBI" id="CHEBI:16526"/>
        <dbReference type="ChEBI" id="CHEBI:57287"/>
        <dbReference type="ChEBI" id="CHEBI:57384"/>
        <dbReference type="ChEBI" id="CHEBI:74298"/>
        <dbReference type="ChEBI" id="CHEBI:74304"/>
    </reaction>
    <physiologicalReaction direction="left-to-right" evidence="1">
        <dbReference type="Rhea" id="RHEA:36944"/>
    </physiologicalReaction>
</comment>
<comment type="catalytic activity">
    <reaction evidence="1">
        <text>(7Z,10Z,13Z,16Z)-docosatetraenoyl-CoA + malonyl-CoA + H(+) = (9Z,12Z,15Z,18Z)-3-oxotetracosatetraenoyl-CoA + CO2 + CoA</text>
        <dbReference type="Rhea" id="RHEA:36479"/>
        <dbReference type="ChEBI" id="CHEBI:15378"/>
        <dbReference type="ChEBI" id="CHEBI:16526"/>
        <dbReference type="ChEBI" id="CHEBI:57287"/>
        <dbReference type="ChEBI" id="CHEBI:57384"/>
        <dbReference type="ChEBI" id="CHEBI:73856"/>
        <dbReference type="ChEBI" id="CHEBI:73857"/>
    </reaction>
    <physiologicalReaction direction="left-to-right" evidence="1">
        <dbReference type="Rhea" id="RHEA:36480"/>
    </physiologicalReaction>
</comment>
<comment type="catalytic activity">
    <reaction evidence="1">
        <text>(11Z,14Z,17Z,20Z,23Z)-hexacosapentaenoyl-CoA + malonyl-CoA + H(+) = 3-oxo-(13Z,16Z,19Z,22Z,25Z)-octacosapentaenoyl-CoA + CO2 + CoA</text>
        <dbReference type="Rhea" id="RHEA:36819"/>
        <dbReference type="ChEBI" id="CHEBI:15378"/>
        <dbReference type="ChEBI" id="CHEBI:16526"/>
        <dbReference type="ChEBI" id="CHEBI:57287"/>
        <dbReference type="ChEBI" id="CHEBI:57384"/>
        <dbReference type="ChEBI" id="CHEBI:74229"/>
        <dbReference type="ChEBI" id="CHEBI:74230"/>
    </reaction>
    <physiologicalReaction direction="left-to-right" evidence="1">
        <dbReference type="Rhea" id="RHEA:36820"/>
    </physiologicalReaction>
</comment>
<comment type="catalytic activity">
    <reaction evidence="1">
        <text>(13Z,16Z,19Z,22Z,25Z)-octacosapentaenoyl-CoA + malonyl-CoA + H(+) = 3-oxo-(15Z,18Z,21Z,24Z,27Z)-triacontapentaenoyl-CoA + CO2 + CoA</text>
        <dbReference type="Rhea" id="RHEA:36843"/>
        <dbReference type="ChEBI" id="CHEBI:15378"/>
        <dbReference type="ChEBI" id="CHEBI:16526"/>
        <dbReference type="ChEBI" id="CHEBI:57287"/>
        <dbReference type="ChEBI" id="CHEBI:57384"/>
        <dbReference type="ChEBI" id="CHEBI:74233"/>
        <dbReference type="ChEBI" id="CHEBI:74246"/>
    </reaction>
    <physiologicalReaction direction="left-to-right" evidence="1">
        <dbReference type="Rhea" id="RHEA:36844"/>
    </physiologicalReaction>
</comment>
<comment type="catalytic activity">
    <reaction evidence="1">
        <text>(15Z,18Z,21Z,24Z,27Z)-triacontapentaenoyl-CoA + malonyl-CoA + H(+) = 3-oxo-(17Z,20Z,23Z,26Z,29Z)-dotriacontapentaenoyl-CoA + CO2 + CoA</text>
        <dbReference type="Rhea" id="RHEA:36851"/>
        <dbReference type="ChEBI" id="CHEBI:15378"/>
        <dbReference type="ChEBI" id="CHEBI:16526"/>
        <dbReference type="ChEBI" id="CHEBI:57287"/>
        <dbReference type="ChEBI" id="CHEBI:57384"/>
        <dbReference type="ChEBI" id="CHEBI:74247"/>
        <dbReference type="ChEBI" id="CHEBI:74254"/>
    </reaction>
    <physiologicalReaction direction="left-to-right" evidence="1">
        <dbReference type="Rhea" id="RHEA:36852"/>
    </physiologicalReaction>
</comment>
<comment type="catalytic activity">
    <reaction evidence="1">
        <text>(17Z,20Z,23Z,26Z,29Z)-dotriacontapentaenoyl-CoA + malonyl-CoA + H(+) = 3-oxo-(19Z,22Z,25Z,28Z,31Z)-tetratriacontapentaenoyl-CoA + CO2 + CoA</text>
        <dbReference type="Rhea" id="RHEA:36859"/>
        <dbReference type="ChEBI" id="CHEBI:15378"/>
        <dbReference type="ChEBI" id="CHEBI:16526"/>
        <dbReference type="ChEBI" id="CHEBI:57287"/>
        <dbReference type="ChEBI" id="CHEBI:57384"/>
        <dbReference type="ChEBI" id="CHEBI:74249"/>
        <dbReference type="ChEBI" id="CHEBI:74259"/>
    </reaction>
    <physiologicalReaction direction="left-to-right" evidence="1">
        <dbReference type="Rhea" id="RHEA:36860"/>
    </physiologicalReaction>
</comment>
<comment type="catalytic activity">
    <reaction evidence="1">
        <text>(21Z,24Z,27Z,30Z,33Z)-hexatriacontapentaenoyl-CoA + malonyl-CoA + H(+) = 3-oxo-(23Z,26Z,29Z,32Z,35Z)-octatriacontapentaenoyl-CoA + CO2 + CoA</text>
        <dbReference type="Rhea" id="RHEA:36875"/>
        <dbReference type="ChEBI" id="CHEBI:15378"/>
        <dbReference type="ChEBI" id="CHEBI:16526"/>
        <dbReference type="ChEBI" id="CHEBI:57287"/>
        <dbReference type="ChEBI" id="CHEBI:57384"/>
        <dbReference type="ChEBI" id="CHEBI:74262"/>
        <dbReference type="ChEBI" id="CHEBI:74263"/>
    </reaction>
    <physiologicalReaction direction="left-to-right" evidence="1">
        <dbReference type="Rhea" id="RHEA:36876"/>
    </physiologicalReaction>
</comment>
<comment type="catalytic activity">
    <reaction evidence="1">
        <text>(11Z,14Z,17Z,20Z)-hexacosatetraenoyl-CoA + malonyl-CoA + H(+) = (13Z,16Z,19Z,22Z)-3-oxooctacosatetraenoyl-CoA + CO2 + CoA</text>
        <dbReference type="Rhea" id="RHEA:36907"/>
        <dbReference type="ChEBI" id="CHEBI:15378"/>
        <dbReference type="ChEBI" id="CHEBI:16526"/>
        <dbReference type="ChEBI" id="CHEBI:57287"/>
        <dbReference type="ChEBI" id="CHEBI:57384"/>
        <dbReference type="ChEBI" id="CHEBI:74282"/>
        <dbReference type="ChEBI" id="CHEBI:74283"/>
    </reaction>
    <physiologicalReaction direction="left-to-right" evidence="1">
        <dbReference type="Rhea" id="RHEA:36908"/>
    </physiologicalReaction>
</comment>
<comment type="catalytic activity">
    <reaction evidence="1">
        <text>(13Z,16Z,19Z,22Z)-octacosatetraenoyl-CoA + malonyl-CoA + H(+) = 3-oxo-(15Z,18Z,21Z,24Z)-triacontatetraenoyl-CoA + CO2 + CoA</text>
        <dbReference type="Rhea" id="RHEA:36911"/>
        <dbReference type="ChEBI" id="CHEBI:15378"/>
        <dbReference type="ChEBI" id="CHEBI:16526"/>
        <dbReference type="ChEBI" id="CHEBI:57287"/>
        <dbReference type="ChEBI" id="CHEBI:57384"/>
        <dbReference type="ChEBI" id="CHEBI:74285"/>
        <dbReference type="ChEBI" id="CHEBI:74286"/>
    </reaction>
    <physiologicalReaction direction="left-to-right" evidence="1">
        <dbReference type="Rhea" id="RHEA:36912"/>
    </physiologicalReaction>
</comment>
<comment type="catalytic activity">
    <reaction evidence="1">
        <text>(15Z,18Z,21Z,24Z)-triacontatetraenoyl-CoA + malonyl-CoA + H(+) = 3-oxo-(17Z,20Z,23Z,26Z)-dotriacontatetraenoyl-CoA + CO2 + CoA</text>
        <dbReference type="Rhea" id="RHEA:36915"/>
        <dbReference type="ChEBI" id="CHEBI:15378"/>
        <dbReference type="ChEBI" id="CHEBI:16526"/>
        <dbReference type="ChEBI" id="CHEBI:57287"/>
        <dbReference type="ChEBI" id="CHEBI:57384"/>
        <dbReference type="ChEBI" id="CHEBI:74287"/>
        <dbReference type="ChEBI" id="CHEBI:74288"/>
    </reaction>
    <physiologicalReaction direction="left-to-right" evidence="1">
        <dbReference type="Rhea" id="RHEA:36916"/>
    </physiologicalReaction>
</comment>
<comment type="catalytic activity">
    <reaction evidence="1">
        <text>(17Z,20Z,23Z,26Z)-dotriacontatetraenoyl-CoA + malonyl-CoA + H(+) = 3-oxo-(19Z,22Z,25Z,28Z)-tetratriacontatetraenoyl-CoA + CO2 + CoA</text>
        <dbReference type="Rhea" id="RHEA:36919"/>
        <dbReference type="ChEBI" id="CHEBI:15378"/>
        <dbReference type="ChEBI" id="CHEBI:16526"/>
        <dbReference type="ChEBI" id="CHEBI:57287"/>
        <dbReference type="ChEBI" id="CHEBI:57384"/>
        <dbReference type="ChEBI" id="CHEBI:74289"/>
        <dbReference type="ChEBI" id="CHEBI:74290"/>
    </reaction>
    <physiologicalReaction direction="left-to-right" evidence="1">
        <dbReference type="Rhea" id="RHEA:36920"/>
    </physiologicalReaction>
</comment>
<comment type="catalytic activity">
    <reaction evidence="1">
        <text>(19Z,22Z,25Z,28Z)-tetratriacontatetraenoyl-CoA + malonyl-CoA + H(+) = 3-oxo-(21Z,24Z,27Z,30Z)-hexatriacontatetraenoyl-CoA + CO2 + CoA</text>
        <dbReference type="Rhea" id="RHEA:36923"/>
        <dbReference type="ChEBI" id="CHEBI:15378"/>
        <dbReference type="ChEBI" id="CHEBI:16526"/>
        <dbReference type="ChEBI" id="CHEBI:57287"/>
        <dbReference type="ChEBI" id="CHEBI:57384"/>
        <dbReference type="ChEBI" id="CHEBI:74291"/>
        <dbReference type="ChEBI" id="CHEBI:74292"/>
    </reaction>
    <physiologicalReaction direction="left-to-right" evidence="1">
        <dbReference type="Rhea" id="RHEA:36924"/>
    </physiologicalReaction>
</comment>
<comment type="catalytic activity">
    <reaction evidence="1">
        <text>(21Z,24Z,27Z,30Z)-hexatriacontatetraenoyl-CoA + malonyl-CoA + H(+) = 3-oxo-(23Z,26Z,29Z,32Z)-octatriacontatetraenoyl-CoA + CO2 + CoA</text>
        <dbReference type="Rhea" id="RHEA:36927"/>
        <dbReference type="ChEBI" id="CHEBI:15378"/>
        <dbReference type="ChEBI" id="CHEBI:16526"/>
        <dbReference type="ChEBI" id="CHEBI:57287"/>
        <dbReference type="ChEBI" id="CHEBI:57384"/>
        <dbReference type="ChEBI" id="CHEBI:74293"/>
        <dbReference type="ChEBI" id="CHEBI:74294"/>
    </reaction>
    <physiologicalReaction direction="left-to-right" evidence="1">
        <dbReference type="Rhea" id="RHEA:36928"/>
    </physiologicalReaction>
</comment>
<comment type="catalytic activity">
    <reaction evidence="1">
        <text>(6Z,9Z,12Z,15Z,18Z,21Z)-tetracosahexaenoyl-CoA + malonyl-CoA + H(+) = 3-oxo-(8Z,11Z,14Z,17Z,20Z,23Z)-hexacosahexaenoyl-CoA + CO2 + CoA</text>
        <dbReference type="Rhea" id="RHEA:36947"/>
        <dbReference type="ChEBI" id="CHEBI:15378"/>
        <dbReference type="ChEBI" id="CHEBI:16526"/>
        <dbReference type="ChEBI" id="CHEBI:57287"/>
        <dbReference type="ChEBI" id="CHEBI:57384"/>
        <dbReference type="ChEBI" id="CHEBI:74086"/>
        <dbReference type="ChEBI" id="CHEBI:74305"/>
    </reaction>
    <physiologicalReaction direction="left-to-right" evidence="1">
        <dbReference type="Rhea" id="RHEA:36948"/>
    </physiologicalReaction>
</comment>
<comment type="catalytic activity">
    <reaction evidence="1">
        <text>(8Z,11Z,14Z,17Z,20Z,23Z)-hexacosahexaenoyl-CoA + malonyl-CoA + H(+) = 3-oxo-(10Z,13Z,16Z,19Z,22Z,25Z)-octacosahexaenoyl-CoA + CO2 + CoA</text>
        <dbReference type="Rhea" id="RHEA:36963"/>
        <dbReference type="ChEBI" id="CHEBI:15378"/>
        <dbReference type="ChEBI" id="CHEBI:16526"/>
        <dbReference type="ChEBI" id="CHEBI:57287"/>
        <dbReference type="ChEBI" id="CHEBI:57384"/>
        <dbReference type="ChEBI" id="CHEBI:74306"/>
        <dbReference type="ChEBI" id="CHEBI:74311"/>
    </reaction>
    <physiologicalReaction direction="left-to-right" evidence="1">
        <dbReference type="Rhea" id="RHEA:36964"/>
    </physiologicalReaction>
</comment>
<comment type="catalytic activity">
    <reaction evidence="1">
        <text>(10Z,13Z,16Z,19Z,22Z,25Z)-octacosahexaenoyl-CoA + malonyl-CoA + H(+) = 3-oxo-(12Z,15Z,18Z,21Z,24Z,27Z)-triacontahexaenoyl-CoA + CO2 + CoA</text>
        <dbReference type="Rhea" id="RHEA:36967"/>
        <dbReference type="ChEBI" id="CHEBI:15378"/>
        <dbReference type="ChEBI" id="CHEBI:16526"/>
        <dbReference type="ChEBI" id="CHEBI:57287"/>
        <dbReference type="ChEBI" id="CHEBI:57384"/>
        <dbReference type="ChEBI" id="CHEBI:74312"/>
        <dbReference type="ChEBI" id="CHEBI:74313"/>
    </reaction>
    <physiologicalReaction direction="left-to-right" evidence="1">
        <dbReference type="Rhea" id="RHEA:36968"/>
    </physiologicalReaction>
</comment>
<comment type="catalytic activity">
    <reaction evidence="1">
        <text>(12Z,15Z,18Z,21Z,24Z,27Z)-triacontahexaenoyl-CoA + malonyl-CoA + H(+) = 3-oxo-(14Z,17Z,20Z,23Z,26Z,29Z)-dotriacontahexaenoyl-CoA + CO2 + CoA</text>
        <dbReference type="Rhea" id="RHEA:36979"/>
        <dbReference type="ChEBI" id="CHEBI:15378"/>
        <dbReference type="ChEBI" id="CHEBI:16526"/>
        <dbReference type="ChEBI" id="CHEBI:57287"/>
        <dbReference type="ChEBI" id="CHEBI:57384"/>
        <dbReference type="ChEBI" id="CHEBI:74315"/>
        <dbReference type="ChEBI" id="CHEBI:74316"/>
    </reaction>
    <physiologicalReaction direction="left-to-right" evidence="1">
        <dbReference type="Rhea" id="RHEA:36980"/>
    </physiologicalReaction>
</comment>
<comment type="catalytic activity">
    <reaction evidence="1">
        <text>(14Z,17Z,20Z,23Z,26Z,29Z)-dotriacontahexaenoyl-CoA + malonyl-CoA + H(+) = 3-oxo-(16Z,19Z,22Z,25Z,28Z,31Z)-tetratriacontahexaenoyl-CoA + CO2 + CoA</text>
        <dbReference type="Rhea" id="RHEA:36983"/>
        <dbReference type="ChEBI" id="CHEBI:15378"/>
        <dbReference type="ChEBI" id="CHEBI:16526"/>
        <dbReference type="ChEBI" id="CHEBI:57287"/>
        <dbReference type="ChEBI" id="CHEBI:57384"/>
        <dbReference type="ChEBI" id="CHEBI:74317"/>
        <dbReference type="ChEBI" id="CHEBI:74318"/>
    </reaction>
    <physiologicalReaction direction="left-to-right" evidence="1">
        <dbReference type="Rhea" id="RHEA:36984"/>
    </physiologicalReaction>
</comment>
<comment type="catalytic activity">
    <reaction evidence="1">
        <text>(16Z,19Z,22Z,25Z,28Z,31Z)-tetratriacontahexaenoyl-CoA + malonyl-CoA + H(+) = 3-oxo-(18Z,21Z,24Z,27Z,30Z,33Z)-hexatriacontahexaenoyl-CoA + CO2 + CoA</text>
        <dbReference type="Rhea" id="RHEA:36995"/>
        <dbReference type="ChEBI" id="CHEBI:15378"/>
        <dbReference type="ChEBI" id="CHEBI:16526"/>
        <dbReference type="ChEBI" id="CHEBI:57287"/>
        <dbReference type="ChEBI" id="CHEBI:57384"/>
        <dbReference type="ChEBI" id="CHEBI:74319"/>
        <dbReference type="ChEBI" id="CHEBI:74320"/>
    </reaction>
    <physiologicalReaction direction="left-to-right" evidence="1">
        <dbReference type="Rhea" id="RHEA:36996"/>
    </physiologicalReaction>
</comment>
<comment type="catalytic activity">
    <reaction evidence="1">
        <text>(9Z,12Z,15Z,18Z,21Z)-tetracosapentaenoyl-CoA + malonyl-CoA + H(+) = 3-oxo-(11Z,14Z,17Z,20Z,23Z)-hexacosapentaenoyl-CoA + CO2 + CoA</text>
        <dbReference type="Rhea" id="RHEA:37243"/>
        <dbReference type="ChEBI" id="CHEBI:15378"/>
        <dbReference type="ChEBI" id="CHEBI:16526"/>
        <dbReference type="ChEBI" id="CHEBI:57287"/>
        <dbReference type="ChEBI" id="CHEBI:57384"/>
        <dbReference type="ChEBI" id="CHEBI:74083"/>
        <dbReference type="ChEBI" id="CHEBI:74663"/>
    </reaction>
    <physiologicalReaction direction="left-to-right" evidence="1">
        <dbReference type="Rhea" id="RHEA:37244"/>
    </physiologicalReaction>
</comment>
<comment type="pathway">
    <text evidence="2">Lipid metabolism; fatty acid biosynthesis.</text>
</comment>
<comment type="subunit">
    <text evidence="2">Oligomer.</text>
</comment>
<comment type="subcellular location">
    <subcellularLocation>
        <location evidence="2">Endoplasmic reticulum membrane</location>
        <topology evidence="2">Multi-pass membrane protein</topology>
    </subcellularLocation>
</comment>
<comment type="tissue specificity">
    <text evidence="4">Expressed mainly in retina. Also expressed in skin and thymus.</text>
</comment>
<comment type="domain">
    <text evidence="2">The C-terminal di-lysine motif confers endoplasmic reticulum localization.</text>
</comment>
<comment type="PTM">
    <text evidence="1">N-glycosylated.</text>
</comment>
<comment type="similarity">
    <text evidence="2">Belongs to the ELO family. ELOVL4 subfamily.</text>
</comment>
<reference key="1">
    <citation type="journal article" date="2003" name="Exp. Anim.">
        <title>Molecular cloning of ELOVL4 gene from cynomolgus monkey (Macaca fascicularis).</title>
        <authorList>
            <person name="Umeda S."/>
            <person name="Ayyagari R."/>
            <person name="Suzuki M.T."/>
            <person name="Ono F."/>
            <person name="Iwata F."/>
            <person name="Fujiki K."/>
            <person name="Kanai A."/>
            <person name="Takada Y."/>
            <person name="Yoshikawa Y."/>
            <person name="Tanaka Y."/>
            <person name="Iwata T."/>
        </authorList>
    </citation>
    <scope>NUCLEOTIDE SEQUENCE [GENOMIC DNA / MRNA]</scope>
    <scope>TISSUE SPECIFICITY</scope>
</reference>
<reference key="2">
    <citation type="submission" date="2001-06" db="EMBL/GenBank/DDBJ databases">
        <title>Isolation of full-length cDNA clones from macaque brain cDNA libraries.</title>
        <authorList>
            <person name="Osada N."/>
            <person name="Hida M."/>
            <person name="Kusuda J."/>
            <person name="Tanuma R."/>
            <person name="Iseki K."/>
            <person name="Hirai M."/>
            <person name="Terao K."/>
            <person name="Suzuki Y."/>
            <person name="Sugano S."/>
            <person name="Hashimoto K."/>
        </authorList>
    </citation>
    <scope>NUCLEOTIDE SEQUENCE [LARGE SCALE MRNA]</scope>
    <source>
        <tissue>Temporal cortex</tissue>
    </source>
</reference>
<evidence type="ECO:0000250" key="1">
    <source>
        <dbReference type="UniProtKB" id="Q9EQC4"/>
    </source>
</evidence>
<evidence type="ECO:0000255" key="2">
    <source>
        <dbReference type="HAMAP-Rule" id="MF_03204"/>
    </source>
</evidence>
<evidence type="ECO:0000256" key="3">
    <source>
        <dbReference type="SAM" id="MobiDB-lite"/>
    </source>
</evidence>
<evidence type="ECO:0000269" key="4">
    <source>
    </source>
</evidence>
<name>ELOV4_MACFA</name>
<gene>
    <name evidence="2" type="primary">ELOVL4</name>
    <name type="ORF">QtrA-14469</name>
</gene>
<organism>
    <name type="scientific">Macaca fascicularis</name>
    <name type="common">Crab-eating macaque</name>
    <name type="synonym">Cynomolgus monkey</name>
    <dbReference type="NCBI Taxonomy" id="9541"/>
    <lineage>
        <taxon>Eukaryota</taxon>
        <taxon>Metazoa</taxon>
        <taxon>Chordata</taxon>
        <taxon>Craniata</taxon>
        <taxon>Vertebrata</taxon>
        <taxon>Euteleostomi</taxon>
        <taxon>Mammalia</taxon>
        <taxon>Eutheria</taxon>
        <taxon>Euarchontoglires</taxon>
        <taxon>Primates</taxon>
        <taxon>Haplorrhini</taxon>
        <taxon>Catarrhini</taxon>
        <taxon>Cercopithecidae</taxon>
        <taxon>Cercopithecinae</taxon>
        <taxon>Macaca</taxon>
    </lineage>
</organism>